<gene>
    <name type="primary">PLRG1</name>
</gene>
<name>PLRG1_BOVIN</name>
<protein>
    <recommendedName>
        <fullName>Pleiotropic regulator 1</fullName>
    </recommendedName>
</protein>
<organism>
    <name type="scientific">Bos taurus</name>
    <name type="common">Bovine</name>
    <dbReference type="NCBI Taxonomy" id="9913"/>
    <lineage>
        <taxon>Eukaryota</taxon>
        <taxon>Metazoa</taxon>
        <taxon>Chordata</taxon>
        <taxon>Craniata</taxon>
        <taxon>Vertebrata</taxon>
        <taxon>Euteleostomi</taxon>
        <taxon>Mammalia</taxon>
        <taxon>Eutheria</taxon>
        <taxon>Laurasiatheria</taxon>
        <taxon>Artiodactyla</taxon>
        <taxon>Ruminantia</taxon>
        <taxon>Pecora</taxon>
        <taxon>Bovidae</taxon>
        <taxon>Bovinae</taxon>
        <taxon>Bos</taxon>
    </lineage>
</organism>
<dbReference type="EMBL" id="BC112677">
    <property type="protein sequence ID" value="AAI12678.1"/>
    <property type="molecule type" value="mRNA"/>
</dbReference>
<dbReference type="RefSeq" id="NP_001039827.1">
    <property type="nucleotide sequence ID" value="NM_001046362.1"/>
</dbReference>
<dbReference type="SMR" id="Q2KID6"/>
<dbReference type="FunCoup" id="Q2KID6">
    <property type="interactions" value="4313"/>
</dbReference>
<dbReference type="STRING" id="9913.ENSBTAP00000029840"/>
<dbReference type="PaxDb" id="9913-ENSBTAP00000029840"/>
<dbReference type="GeneID" id="533951"/>
<dbReference type="KEGG" id="bta:533951"/>
<dbReference type="CTD" id="5356"/>
<dbReference type="VEuPathDB" id="HostDB:ENSBTAG00000007234"/>
<dbReference type="eggNOG" id="KOG0285">
    <property type="taxonomic scope" value="Eukaryota"/>
</dbReference>
<dbReference type="HOGENOM" id="CLU_000288_72_2_1"/>
<dbReference type="InParanoid" id="Q2KID6"/>
<dbReference type="OMA" id="FAMCFDQ"/>
<dbReference type="OrthoDB" id="10256122at2759"/>
<dbReference type="TreeFam" id="TF105684"/>
<dbReference type="Reactome" id="R-BTA-72163">
    <property type="pathway name" value="mRNA Splicing - Major Pathway"/>
</dbReference>
<dbReference type="Proteomes" id="UP000009136">
    <property type="component" value="Chromosome 17"/>
</dbReference>
<dbReference type="Bgee" id="ENSBTAG00000007234">
    <property type="expression patterns" value="Expressed in oocyte and 107 other cell types or tissues"/>
</dbReference>
<dbReference type="GO" id="GO:0071013">
    <property type="term" value="C:catalytic step 2 spliceosome"/>
    <property type="evidence" value="ECO:0000318"/>
    <property type="project" value="GO_Central"/>
</dbReference>
<dbReference type="GO" id="GO:0005662">
    <property type="term" value="C:DNA replication factor A complex"/>
    <property type="evidence" value="ECO:0007669"/>
    <property type="project" value="Ensembl"/>
</dbReference>
<dbReference type="GO" id="GO:0001650">
    <property type="term" value="C:fibrillar center"/>
    <property type="evidence" value="ECO:0007669"/>
    <property type="project" value="Ensembl"/>
</dbReference>
<dbReference type="GO" id="GO:0031965">
    <property type="term" value="C:nuclear membrane"/>
    <property type="evidence" value="ECO:0007669"/>
    <property type="project" value="Ensembl"/>
</dbReference>
<dbReference type="GO" id="GO:0016607">
    <property type="term" value="C:nuclear speck"/>
    <property type="evidence" value="ECO:0007669"/>
    <property type="project" value="UniProtKB-SubCell"/>
</dbReference>
<dbReference type="GO" id="GO:0005634">
    <property type="term" value="C:nucleus"/>
    <property type="evidence" value="ECO:0000250"/>
    <property type="project" value="UniProtKB"/>
</dbReference>
<dbReference type="GO" id="GO:0000974">
    <property type="term" value="C:Prp19 complex"/>
    <property type="evidence" value="ECO:0000318"/>
    <property type="project" value="GO_Central"/>
</dbReference>
<dbReference type="GO" id="GO:0071007">
    <property type="term" value="C:U2-type catalytic step 2 spliceosome"/>
    <property type="evidence" value="ECO:0000250"/>
    <property type="project" value="UniProtKB"/>
</dbReference>
<dbReference type="GO" id="GO:0000398">
    <property type="term" value="P:mRNA splicing, via spliceosome"/>
    <property type="evidence" value="ECO:0000250"/>
    <property type="project" value="UniProtKB"/>
</dbReference>
<dbReference type="GO" id="GO:1900087">
    <property type="term" value="P:positive regulation of G1/S transition of mitotic cell cycle"/>
    <property type="evidence" value="ECO:0007669"/>
    <property type="project" value="Ensembl"/>
</dbReference>
<dbReference type="GO" id="GO:0034504">
    <property type="term" value="P:protein localization to nucleus"/>
    <property type="evidence" value="ECO:0007669"/>
    <property type="project" value="Ensembl"/>
</dbReference>
<dbReference type="CDD" id="cd00200">
    <property type="entry name" value="WD40"/>
    <property type="match status" value="1"/>
</dbReference>
<dbReference type="FunFam" id="2.130.10.10:FF:000012">
    <property type="entry name" value="Putative pleiotropic regulator 1"/>
    <property type="match status" value="1"/>
</dbReference>
<dbReference type="Gene3D" id="2.130.10.10">
    <property type="entry name" value="YVTN repeat-like/Quinoprotein amine dehydrogenase"/>
    <property type="match status" value="1"/>
</dbReference>
<dbReference type="InterPro" id="IPR020472">
    <property type="entry name" value="G-protein_beta_WD-40_rep"/>
</dbReference>
<dbReference type="InterPro" id="IPR045241">
    <property type="entry name" value="Prp46/PLRG1-like"/>
</dbReference>
<dbReference type="InterPro" id="IPR015943">
    <property type="entry name" value="WD40/YVTN_repeat-like_dom_sf"/>
</dbReference>
<dbReference type="InterPro" id="IPR019775">
    <property type="entry name" value="WD40_repeat_CS"/>
</dbReference>
<dbReference type="InterPro" id="IPR036322">
    <property type="entry name" value="WD40_repeat_dom_sf"/>
</dbReference>
<dbReference type="InterPro" id="IPR001680">
    <property type="entry name" value="WD40_rpt"/>
</dbReference>
<dbReference type="PANTHER" id="PTHR19923:SF0">
    <property type="entry name" value="PLEIOTROPIC REGULATOR 1"/>
    <property type="match status" value="1"/>
</dbReference>
<dbReference type="PANTHER" id="PTHR19923">
    <property type="entry name" value="WD40 REPEAT PROTEINPRL1/PRL2-RELATED"/>
    <property type="match status" value="1"/>
</dbReference>
<dbReference type="Pfam" id="PF00400">
    <property type="entry name" value="WD40"/>
    <property type="match status" value="7"/>
</dbReference>
<dbReference type="PRINTS" id="PR00320">
    <property type="entry name" value="GPROTEINBRPT"/>
</dbReference>
<dbReference type="SMART" id="SM00320">
    <property type="entry name" value="WD40"/>
    <property type="match status" value="7"/>
</dbReference>
<dbReference type="SUPFAM" id="SSF50978">
    <property type="entry name" value="WD40 repeat-like"/>
    <property type="match status" value="1"/>
</dbReference>
<dbReference type="PROSITE" id="PS00678">
    <property type="entry name" value="WD_REPEATS_1"/>
    <property type="match status" value="2"/>
</dbReference>
<dbReference type="PROSITE" id="PS50082">
    <property type="entry name" value="WD_REPEATS_2"/>
    <property type="match status" value="5"/>
</dbReference>
<dbReference type="PROSITE" id="PS50294">
    <property type="entry name" value="WD_REPEATS_REGION"/>
    <property type="match status" value="1"/>
</dbReference>
<feature type="chain" id="PRO_0000247544" description="Pleiotropic regulator 1">
    <location>
        <begin position="1"/>
        <end position="513"/>
    </location>
</feature>
<feature type="repeat" description="WD 1">
    <location>
        <begin position="201"/>
        <end position="240"/>
    </location>
</feature>
<feature type="repeat" description="WD 2">
    <location>
        <begin position="243"/>
        <end position="282"/>
    </location>
</feature>
<feature type="repeat" description="WD 3">
    <location>
        <begin position="285"/>
        <end position="324"/>
    </location>
</feature>
<feature type="repeat" description="WD 4">
    <location>
        <begin position="327"/>
        <end position="366"/>
    </location>
</feature>
<feature type="repeat" description="WD 5">
    <location>
        <begin position="369"/>
        <end position="409"/>
    </location>
</feature>
<feature type="repeat" description="WD 6">
    <location>
        <begin position="410"/>
        <end position="448"/>
    </location>
</feature>
<feature type="repeat" description="WD 7">
    <location>
        <begin position="459"/>
        <end position="498"/>
    </location>
</feature>
<feature type="modified residue" description="N-acetylmethionine" evidence="1">
    <location>
        <position position="1"/>
    </location>
</feature>
<feature type="modified residue" description="Phosphoserine" evidence="1">
    <location>
        <position position="119"/>
    </location>
</feature>
<feature type="modified residue" description="Phosphoserine" evidence="1">
    <location>
        <position position="200"/>
    </location>
</feature>
<feature type="modified residue" description="Phosphoserine" evidence="1">
    <location>
        <position position="390"/>
    </location>
</feature>
<reference key="1">
    <citation type="submission" date="2006-01" db="EMBL/GenBank/DDBJ databases">
        <authorList>
            <consortium name="NIH - Mammalian Gene Collection (MGC) project"/>
        </authorList>
    </citation>
    <scope>NUCLEOTIDE SEQUENCE [LARGE SCALE MRNA]</scope>
    <source>
        <strain>Hereford</strain>
        <tissue>Hypothalamus</tissue>
    </source>
</reference>
<comment type="function">
    <text evidence="1">Involved in pre-mRNA splicing as component of the spliceosome. Component of the PRP19-CDC5L complex that forms an integral part of the spliceosome and is required for activating pre-mRNA splicing (By similarity). As a component of the minor spliceosome, involved in the splicing of U12-type introns in pre-mRNAs (By similarity).</text>
</comment>
<comment type="subunit">
    <text evidence="1">Identified in the spliceosome C complex. Component of the PRP19-CDC5L splicing complex composed of a core complex comprising a homotetramer of PRPF19, CDC5L, PLRG1 and BCAS2, and at least three less stably associated proteins CTNNBL1, CWC15 and HSPA8. Interacts (via its WD40 repeat domain) directly with CDC5L (via its C-terminal); the interaction is required for mRNA splicing but not for spliceosome assembly. Component of the minor spliceosome, which splices U12-type introns. Within this complex, interacts with CRIPT (By similarity). Also interacts directly in the complex with BCAS2 and PRPF19. Interacts with USB1 (By similarity).</text>
</comment>
<comment type="subcellular location">
    <subcellularLocation>
        <location evidence="1">Nucleus</location>
    </subcellularLocation>
    <subcellularLocation>
        <location evidence="1">Nucleus speckle</location>
    </subcellularLocation>
</comment>
<comment type="similarity">
    <text evidence="2">Belongs to the WD repeat PRL1/PRL2 family.</text>
</comment>
<accession>Q2KID6</accession>
<evidence type="ECO:0000250" key="1">
    <source>
        <dbReference type="UniProtKB" id="O43660"/>
    </source>
</evidence>
<evidence type="ECO:0000305" key="2"/>
<sequence>MVEEVQKHSVHTLVFRSLKRTHDMFVADNGKPVPLDEESHKRKMAIKLRNEYGPVLHMPTSKENLKEKVPQNASDSYGHKQYPANQGQEVEYLVTGTHPYPPGPGVALTADTKIQRMPSESAAQSLAVALPASQARADANRPVPAGGEYRHPGAPDRAQPAGAVVMEGSNAKNSALMAKKAPTMPKPQWHPPWKLYRVISGHLGWVRCIAVEPGNQWFVTGSADRTIKIWDLASGKLKLSLTGHISTVRGVIVSTRSPYLFSCGEDKQVKCWDLEYNKVIRHYHGHLSAVYGLDLHPTIDVLVTCSRDSTARIWDVRTKASVHTLSGHTNAVATVRCQAAEPQIITGSHDTTIRLWDLVAGKTRVTLTNHKKSVRAVVLHPRHYTFASGSPDNIKQWKFPDGSFIQNLSGHNAIINTLTVNSDGVLVSGADNGTMHLWDWRTGYNFQRVHAAVQPGSLDSESGIFACAFDQSESRLLTAEADKTIKVYKEDDTATEETHPVSWKPEIIKRKRF</sequence>
<keyword id="KW-0007">Acetylation</keyword>
<keyword id="KW-0507">mRNA processing</keyword>
<keyword id="KW-0508">mRNA splicing</keyword>
<keyword id="KW-0539">Nucleus</keyword>
<keyword id="KW-0597">Phosphoprotein</keyword>
<keyword id="KW-1185">Reference proteome</keyword>
<keyword id="KW-0677">Repeat</keyword>
<keyword id="KW-0747">Spliceosome</keyword>
<keyword id="KW-0853">WD repeat</keyword>
<proteinExistence type="evidence at transcript level"/>